<evidence type="ECO:0000250" key="1">
    <source>
        <dbReference type="UniProtKB" id="Q9D517"/>
    </source>
</evidence>
<evidence type="ECO:0000255" key="2"/>
<evidence type="ECO:0000269" key="3">
    <source>
    </source>
</evidence>
<evidence type="ECO:0000269" key="4">
    <source>
    </source>
</evidence>
<evidence type="ECO:0000305" key="5"/>
<evidence type="ECO:0000305" key="6">
    <source>
    </source>
</evidence>
<protein>
    <recommendedName>
        <fullName>1-acyl-sn-glycerol-3-phosphate acyltransferase epsilon</fullName>
        <ecNumber evidence="4">2.3.1.51</ecNumber>
    </recommendedName>
    <alternativeName>
        <fullName>1-acylglycerol-3-phosphate O-acyltransferase 5</fullName>
        <shortName>1-AGP acyltransferase 5</shortName>
        <shortName>1-AGPAT 5</shortName>
    </alternativeName>
    <alternativeName>
        <fullName>Lysophosphatidic acid acyltransferase epsilon</fullName>
        <shortName>LPAAT-epsilon</shortName>
    </alternativeName>
</protein>
<feature type="chain" id="PRO_0000208200" description="1-acyl-sn-glycerol-3-phosphate acyltransferase epsilon">
    <location>
        <begin position="1"/>
        <end position="364"/>
    </location>
</feature>
<feature type="transmembrane region" description="Helical" evidence="2">
    <location>
        <begin position="15"/>
        <end position="35"/>
    </location>
</feature>
<feature type="transmembrane region" description="Helical" evidence="2">
    <location>
        <begin position="61"/>
        <end position="81"/>
    </location>
</feature>
<feature type="transmembrane region" description="Helical" evidence="2">
    <location>
        <begin position="344"/>
        <end position="364"/>
    </location>
</feature>
<feature type="short sequence motif" description="HXXXXD motif" evidence="1">
    <location>
        <begin position="93"/>
        <end position="98"/>
    </location>
</feature>
<feature type="sequence variant" id="VAR_022696" description="In dbSNP:rs17077958.">
    <original>Y</original>
    <variation>C</variation>
    <location>
        <position position="77"/>
    </location>
</feature>
<feature type="sequence conflict" description="In Ref. 2; BAA92069." evidence="5" ref="2">
    <original>L</original>
    <variation>V</variation>
    <location>
        <position position="156"/>
    </location>
</feature>
<gene>
    <name type="primary">AGPAT5</name>
</gene>
<reference key="1">
    <citation type="submission" date="2001-05" db="EMBL/GenBank/DDBJ databases">
        <title>Cloning and expression of LPAAT-epsilon.</title>
        <authorList>
            <person name="Leung D.W."/>
        </authorList>
    </citation>
    <scope>NUCLEOTIDE SEQUENCE [MRNA]</scope>
</reference>
<reference key="2">
    <citation type="journal article" date="2001" name="Genome Res.">
        <title>Towards a catalog of human genes and proteins: sequencing and analysis of 500 novel complete protein coding human cDNAs.</title>
        <authorList>
            <person name="Wiemann S."/>
            <person name="Weil B."/>
            <person name="Wellenreuther R."/>
            <person name="Gassenhuber J."/>
            <person name="Glassl S."/>
            <person name="Ansorge W."/>
            <person name="Boecher M."/>
            <person name="Bloecker H."/>
            <person name="Bauersachs S."/>
            <person name="Blum H."/>
            <person name="Lauber J."/>
            <person name="Duesterhoeft A."/>
            <person name="Beyer A."/>
            <person name="Koehrer K."/>
            <person name="Strack N."/>
            <person name="Mewes H.-W."/>
            <person name="Ottenwaelder B."/>
            <person name="Obermaier B."/>
            <person name="Tampe J."/>
            <person name="Heubner D."/>
            <person name="Wambutt R."/>
            <person name="Korn B."/>
            <person name="Klein M."/>
            <person name="Poustka A."/>
        </authorList>
    </citation>
    <scope>NUCLEOTIDE SEQUENCE [LARGE SCALE MRNA]</scope>
    <source>
        <tissue>Amygdala</tissue>
    </source>
</reference>
<reference key="3">
    <citation type="journal article" date="2004" name="Genome Res.">
        <title>The status, quality, and expansion of the NIH full-length cDNA project: the Mammalian Gene Collection (MGC).</title>
        <authorList>
            <consortium name="The MGC Project Team"/>
        </authorList>
    </citation>
    <scope>NUCLEOTIDE SEQUENCE [LARGE SCALE MRNA]</scope>
    <source>
        <tissue>Brain</tissue>
        <tissue>Lung</tissue>
    </source>
</reference>
<reference key="4">
    <citation type="journal article" date="2004" name="Nat. Genet.">
        <title>Complete sequencing and characterization of 21,243 full-length human cDNAs.</title>
        <authorList>
            <person name="Ota T."/>
            <person name="Suzuki Y."/>
            <person name="Nishikawa T."/>
            <person name="Otsuki T."/>
            <person name="Sugiyama T."/>
            <person name="Irie R."/>
            <person name="Wakamatsu A."/>
            <person name="Hayashi K."/>
            <person name="Sato H."/>
            <person name="Nagai K."/>
            <person name="Kimura K."/>
            <person name="Makita H."/>
            <person name="Sekine M."/>
            <person name="Obayashi M."/>
            <person name="Nishi T."/>
            <person name="Shibahara T."/>
            <person name="Tanaka T."/>
            <person name="Ishii S."/>
            <person name="Yamamoto J."/>
            <person name="Saito K."/>
            <person name="Kawai Y."/>
            <person name="Isono Y."/>
            <person name="Nakamura Y."/>
            <person name="Nagahari K."/>
            <person name="Murakami K."/>
            <person name="Yasuda T."/>
            <person name="Iwayanagi T."/>
            <person name="Wagatsuma M."/>
            <person name="Shiratori A."/>
            <person name="Sudo H."/>
            <person name="Hosoiri T."/>
            <person name="Kaku Y."/>
            <person name="Kodaira H."/>
            <person name="Kondo H."/>
            <person name="Sugawara M."/>
            <person name="Takahashi M."/>
            <person name="Kanda K."/>
            <person name="Yokoi T."/>
            <person name="Furuya T."/>
            <person name="Kikkawa E."/>
            <person name="Omura Y."/>
            <person name="Abe K."/>
            <person name="Kamihara K."/>
            <person name="Katsuta N."/>
            <person name="Sato K."/>
            <person name="Tanikawa M."/>
            <person name="Yamazaki M."/>
            <person name="Ninomiya K."/>
            <person name="Ishibashi T."/>
            <person name="Yamashita H."/>
            <person name="Murakawa K."/>
            <person name="Fujimori K."/>
            <person name="Tanai H."/>
            <person name="Kimata M."/>
            <person name="Watanabe M."/>
            <person name="Hiraoka S."/>
            <person name="Chiba Y."/>
            <person name="Ishida S."/>
            <person name="Ono Y."/>
            <person name="Takiguchi S."/>
            <person name="Watanabe S."/>
            <person name="Yosida M."/>
            <person name="Hotuta T."/>
            <person name="Kusano J."/>
            <person name="Kanehori K."/>
            <person name="Takahashi-Fujii A."/>
            <person name="Hara H."/>
            <person name="Tanase T.-O."/>
            <person name="Nomura Y."/>
            <person name="Togiya S."/>
            <person name="Komai F."/>
            <person name="Hara R."/>
            <person name="Takeuchi K."/>
            <person name="Arita M."/>
            <person name="Imose N."/>
            <person name="Musashino K."/>
            <person name="Yuuki H."/>
            <person name="Oshima A."/>
            <person name="Sasaki N."/>
            <person name="Aotsuka S."/>
            <person name="Yoshikawa Y."/>
            <person name="Matsunawa H."/>
            <person name="Ichihara T."/>
            <person name="Shiohata N."/>
            <person name="Sano S."/>
            <person name="Moriya S."/>
            <person name="Momiyama H."/>
            <person name="Satoh N."/>
            <person name="Takami S."/>
            <person name="Terashima Y."/>
            <person name="Suzuki O."/>
            <person name="Nakagawa S."/>
            <person name="Senoh A."/>
            <person name="Mizoguchi H."/>
            <person name="Goto Y."/>
            <person name="Shimizu F."/>
            <person name="Wakebe H."/>
            <person name="Hishigaki H."/>
            <person name="Watanabe T."/>
            <person name="Sugiyama A."/>
            <person name="Takemoto M."/>
            <person name="Kawakami B."/>
            <person name="Yamazaki M."/>
            <person name="Watanabe K."/>
            <person name="Kumagai A."/>
            <person name="Itakura S."/>
            <person name="Fukuzumi Y."/>
            <person name="Fujimori Y."/>
            <person name="Komiyama M."/>
            <person name="Tashiro H."/>
            <person name="Tanigami A."/>
            <person name="Fujiwara T."/>
            <person name="Ono T."/>
            <person name="Yamada K."/>
            <person name="Fujii Y."/>
            <person name="Ozaki K."/>
            <person name="Hirao M."/>
            <person name="Ohmori Y."/>
            <person name="Kawabata A."/>
            <person name="Hikiji T."/>
            <person name="Kobatake N."/>
            <person name="Inagaki H."/>
            <person name="Ikema Y."/>
            <person name="Okamoto S."/>
            <person name="Okitani R."/>
            <person name="Kawakami T."/>
            <person name="Noguchi S."/>
            <person name="Itoh T."/>
            <person name="Shigeta K."/>
            <person name="Senba T."/>
            <person name="Matsumura K."/>
            <person name="Nakajima Y."/>
            <person name="Mizuno T."/>
            <person name="Morinaga M."/>
            <person name="Sasaki M."/>
            <person name="Togashi T."/>
            <person name="Oyama M."/>
            <person name="Hata H."/>
            <person name="Watanabe M."/>
            <person name="Komatsu T."/>
            <person name="Mizushima-Sugano J."/>
            <person name="Satoh T."/>
            <person name="Shirai Y."/>
            <person name="Takahashi Y."/>
            <person name="Nakagawa K."/>
            <person name="Okumura K."/>
            <person name="Nagase T."/>
            <person name="Nomura N."/>
            <person name="Kikuchi H."/>
            <person name="Masuho Y."/>
            <person name="Yamashita R."/>
            <person name="Nakai K."/>
            <person name="Yada T."/>
            <person name="Nakamura Y."/>
            <person name="Ohara O."/>
            <person name="Isogai T."/>
            <person name="Sugano S."/>
        </authorList>
    </citation>
    <scope>NUCLEOTIDE SEQUENCE [LARGE SCALE MRNA] OF 9-364</scope>
    <source>
        <tissue>Placenta</tissue>
    </source>
</reference>
<reference key="5">
    <citation type="journal article" date="2006" name="Arch. Biochem. Biophys.">
        <title>Functional characterization of human 1-acylglycerol-3-phosphate acyltransferase isoform 8: cloning, tissue distribution, gene structure, and enzymatic activity.</title>
        <authorList>
            <person name="Agarwal A.K."/>
            <person name="Barnes R.I."/>
            <person name="Garg A."/>
        </authorList>
    </citation>
    <scope>TISSUE SPECIFICITY</scope>
</reference>
<reference key="6">
    <citation type="journal article" date="2011" name="BMC Syst. Biol.">
        <title>Initial characterization of the human central proteome.</title>
        <authorList>
            <person name="Burkard T.R."/>
            <person name="Planyavsky M."/>
            <person name="Kaupe I."/>
            <person name="Breitwieser F.P."/>
            <person name="Buerckstuemmer T."/>
            <person name="Bennett K.L."/>
            <person name="Superti-Furga G."/>
            <person name="Colinge J."/>
        </authorList>
    </citation>
    <scope>IDENTIFICATION BY MASS SPECTROMETRY [LARGE SCALE ANALYSIS]</scope>
</reference>
<reference key="7">
    <citation type="journal article" date="2011" name="J. Lipid Res.">
        <title>Enzymatic activities of the human AGPAT isoform 3 and isoform 5: localization of AGPAT5 to mitochondria.</title>
        <authorList>
            <person name="Prasad S.S."/>
            <person name="Garg A."/>
            <person name="Agarwal A.K."/>
        </authorList>
    </citation>
    <scope>FUNCTION</scope>
    <scope>CATALYTIC ACTIVITY</scope>
    <scope>BIOPHYSICOCHEMICAL PROPERTIES</scope>
    <scope>SUBCELLULAR LOCATION</scope>
    <scope>TISSUE SPECIFICITY</scope>
</reference>
<reference key="8">
    <citation type="journal article" date="2015" name="Proteomics">
        <title>N-terminome analysis of the human mitochondrial proteome.</title>
        <authorList>
            <person name="Vaca Jacome A.S."/>
            <person name="Rabilloud T."/>
            <person name="Schaeffer-Reiss C."/>
            <person name="Rompais M."/>
            <person name="Ayoub D."/>
            <person name="Lane L."/>
            <person name="Bairoch A."/>
            <person name="Van Dorsselaer A."/>
            <person name="Carapito C."/>
        </authorList>
    </citation>
    <scope>IDENTIFICATION BY MASS SPECTROMETRY [LARGE SCALE ANALYSIS]</scope>
</reference>
<accession>Q9NUQ2</accession>
<accession>Q8IZ47</accession>
<accession>Q9BQG4</accession>
<organism>
    <name type="scientific">Homo sapiens</name>
    <name type="common">Human</name>
    <dbReference type="NCBI Taxonomy" id="9606"/>
    <lineage>
        <taxon>Eukaryota</taxon>
        <taxon>Metazoa</taxon>
        <taxon>Chordata</taxon>
        <taxon>Craniata</taxon>
        <taxon>Vertebrata</taxon>
        <taxon>Euteleostomi</taxon>
        <taxon>Mammalia</taxon>
        <taxon>Eutheria</taxon>
        <taxon>Euarchontoglires</taxon>
        <taxon>Primates</taxon>
        <taxon>Haplorrhini</taxon>
        <taxon>Catarrhini</taxon>
        <taxon>Hominidae</taxon>
        <taxon>Homo</taxon>
    </lineage>
</organism>
<proteinExistence type="evidence at protein level"/>
<keyword id="KW-0012">Acyltransferase</keyword>
<keyword id="KW-0256">Endoplasmic reticulum</keyword>
<keyword id="KW-0444">Lipid biosynthesis</keyword>
<keyword id="KW-0443">Lipid metabolism</keyword>
<keyword id="KW-0472">Membrane</keyword>
<keyword id="KW-0496">Mitochondrion</keyword>
<keyword id="KW-0539">Nucleus</keyword>
<keyword id="KW-0594">Phospholipid biosynthesis</keyword>
<keyword id="KW-1208">Phospholipid metabolism</keyword>
<keyword id="KW-1267">Proteomics identification</keyword>
<keyword id="KW-1185">Reference proteome</keyword>
<keyword id="KW-0808">Transferase</keyword>
<keyword id="KW-0812">Transmembrane</keyword>
<keyword id="KW-1133">Transmembrane helix</keyword>
<name>PLCE_HUMAN</name>
<comment type="function">
    <text evidence="4">Converts 1-acyl-sn-glycerol-3-phosphate (lysophosphatidic acid or LPA) into 1,2-diacyl-sn-glycerol-3-phosphate (phosphatidic acid or PA) by incorporating an acyl moiety at the sn-2 position of the glycerol backbone (PubMed:21173190). Acts on LPA containing saturated or unsaturated fatty acids C15:0-C20:4 at the sn-1 position using C18:1-CoA as the acyl donor (PubMed:21173190). Also acts on lysophosphatidylethanolamine using oleoyl-CoA, but not arachidonoyl-CoA, and lysophosphatidylinositol using arachidonoyl-CoA, but not oleoyl-CoA (PubMed:21173190). Activity toward lysophosphatidylglycerol not detectable (PubMed:21173190).</text>
</comment>
<comment type="catalytic activity">
    <reaction evidence="4">
        <text>a 1-acyl-sn-glycero-3-phosphate + an acyl-CoA = a 1,2-diacyl-sn-glycero-3-phosphate + CoA</text>
        <dbReference type="Rhea" id="RHEA:19709"/>
        <dbReference type="ChEBI" id="CHEBI:57287"/>
        <dbReference type="ChEBI" id="CHEBI:57970"/>
        <dbReference type="ChEBI" id="CHEBI:58342"/>
        <dbReference type="ChEBI" id="CHEBI:58608"/>
        <dbReference type="EC" id="2.3.1.51"/>
    </reaction>
    <physiologicalReaction direction="left-to-right" evidence="6">
        <dbReference type="Rhea" id="RHEA:19710"/>
    </physiologicalReaction>
</comment>
<comment type="catalytic activity">
    <reaction evidence="4">
        <text>1-(9Z-octadecenoyl)-sn-glycero-3-phosphate + tetradecanoyl-CoA = 1-(9Z)-octadecenoyl-2-tetradecanoyl-sn-glycero-3-phosphate + CoA</text>
        <dbReference type="Rhea" id="RHEA:37171"/>
        <dbReference type="ChEBI" id="CHEBI:57287"/>
        <dbReference type="ChEBI" id="CHEBI:57385"/>
        <dbReference type="ChEBI" id="CHEBI:74544"/>
        <dbReference type="ChEBI" id="CHEBI:74579"/>
    </reaction>
    <physiologicalReaction direction="left-to-right" evidence="6">
        <dbReference type="Rhea" id="RHEA:37172"/>
    </physiologicalReaction>
</comment>
<comment type="catalytic activity">
    <reaction evidence="4">
        <text>pentadecanoyl-CoA + 1-(9Z-octadecenoyl)-sn-glycero-3-phosphate = 1-(9Z)-octadecenoyl-2-pentadecanoyl-sn-glycero-3-phosphate + CoA</text>
        <dbReference type="Rhea" id="RHEA:37175"/>
        <dbReference type="ChEBI" id="CHEBI:57287"/>
        <dbReference type="ChEBI" id="CHEBI:74309"/>
        <dbReference type="ChEBI" id="CHEBI:74544"/>
        <dbReference type="ChEBI" id="CHEBI:74578"/>
    </reaction>
    <physiologicalReaction direction="left-to-right" evidence="6">
        <dbReference type="Rhea" id="RHEA:37176"/>
    </physiologicalReaction>
</comment>
<comment type="catalytic activity">
    <reaction evidence="4">
        <text>1-(9Z-octadecenoyl)-sn-glycero-3-phosphate + octadecanoyl-CoA = 1-(9Z-octadecenoyl)-2-octadecanoyl-sn-glycero-3-phosphate + CoA</text>
        <dbReference type="Rhea" id="RHEA:37147"/>
        <dbReference type="ChEBI" id="CHEBI:57287"/>
        <dbReference type="ChEBI" id="CHEBI:57394"/>
        <dbReference type="ChEBI" id="CHEBI:74544"/>
        <dbReference type="ChEBI" id="CHEBI:74552"/>
    </reaction>
    <physiologicalReaction direction="left-to-right" evidence="6">
        <dbReference type="Rhea" id="RHEA:37148"/>
    </physiologicalReaction>
</comment>
<comment type="catalytic activity">
    <reaction evidence="4">
        <text>nonadecanoyl-CoA + 1-(9Z-octadecenoyl)-sn-glycero-3-phosphate = 1-(9Z)-octadecenoyl-2-nonadecanoyl-sn-glycero-3-phosphate + CoA</text>
        <dbReference type="Rhea" id="RHEA:37595"/>
        <dbReference type="ChEBI" id="CHEBI:57287"/>
        <dbReference type="ChEBI" id="CHEBI:74544"/>
        <dbReference type="ChEBI" id="CHEBI:75104"/>
        <dbReference type="ChEBI" id="CHEBI:75105"/>
    </reaction>
    <physiologicalReaction direction="left-to-right" evidence="6">
        <dbReference type="Rhea" id="RHEA:37596"/>
    </physiologicalReaction>
</comment>
<comment type="catalytic activity">
    <reaction evidence="4">
        <text>1-(9Z-octadecenoyl)-sn-glycero-3-phosphoethanolamine + (9Z)-octadecenoyl-CoA = 1,2-di-(9Z-octadecenoyl)-sn-glycero-3-phosphoethanolamine + CoA</text>
        <dbReference type="Rhea" id="RHEA:37499"/>
        <dbReference type="ChEBI" id="CHEBI:57287"/>
        <dbReference type="ChEBI" id="CHEBI:57387"/>
        <dbReference type="ChEBI" id="CHEBI:74971"/>
        <dbReference type="ChEBI" id="CHEBI:74986"/>
    </reaction>
    <physiologicalReaction direction="left-to-right" evidence="6">
        <dbReference type="Rhea" id="RHEA:37500"/>
    </physiologicalReaction>
</comment>
<comment type="catalytic activity">
    <reaction evidence="4">
        <text>1-(9Z-octadecenoyl)-sn-glycero-3-phosphocholine + (9Z)-octadecenoyl-CoA = 1,2-di-(9Z-octadecenoyl)-sn-glycero-3-phosphocholine + CoA</text>
        <dbReference type="Rhea" id="RHEA:37387"/>
        <dbReference type="ChEBI" id="CHEBI:28610"/>
        <dbReference type="ChEBI" id="CHEBI:57287"/>
        <dbReference type="ChEBI" id="CHEBI:57387"/>
        <dbReference type="ChEBI" id="CHEBI:74669"/>
    </reaction>
    <physiologicalReaction direction="left-to-right" evidence="6">
        <dbReference type="Rhea" id="RHEA:37388"/>
    </physiologicalReaction>
</comment>
<comment type="catalytic activity">
    <reaction evidence="4">
        <text>1-(9Z-octadecenoyl)-sn-glycero-3-phospho-(1D-myo-inositol) + (5Z,8Z,11Z,14Z)-eicosatetraenoyl-CoA = 1-(9Z-octadecenoyl)-2-(5Z,8Z,11Z,14Z-eicosatetraenoyl)-sn-glycero-3-phospho-1D-myo-inositol + CoA</text>
        <dbReference type="Rhea" id="RHEA:42216"/>
        <dbReference type="ChEBI" id="CHEBI:57287"/>
        <dbReference type="ChEBI" id="CHEBI:57368"/>
        <dbReference type="ChEBI" id="CHEBI:78762"/>
        <dbReference type="ChEBI" id="CHEBI:78765"/>
    </reaction>
    <physiologicalReaction direction="left-to-right" evidence="6">
        <dbReference type="Rhea" id="RHEA:42217"/>
    </physiologicalReaction>
</comment>
<comment type="catalytic activity">
    <reaction evidence="4">
        <text>1-(9Z-octadecenoyl)-sn-glycero-3-phospho-L-serine + (9Z)-octadecenoyl-CoA = 1,2-di-(9Z)-octadecenoyl-sn-glycero-3-phospho-L-serine + CoA</text>
        <dbReference type="Rhea" id="RHEA:37407"/>
        <dbReference type="ChEBI" id="CHEBI:57287"/>
        <dbReference type="ChEBI" id="CHEBI:57387"/>
        <dbReference type="ChEBI" id="CHEBI:74617"/>
        <dbReference type="ChEBI" id="CHEBI:74905"/>
    </reaction>
    <physiologicalReaction direction="left-to-right" evidence="6">
        <dbReference type="Rhea" id="RHEA:37408"/>
    </physiologicalReaction>
</comment>
<comment type="catalytic activity">
    <reaction evidence="4">
        <text>1-(9Z-octadecenoyl)-sn-glycero-3-phospho-L-serine + (5Z,8Z,11Z,14Z)-eicosatetraenoyl-CoA = 1-(9Z-octadecenoyl)-2-(5Z,8Z,11Z,14Z-eicosatetraenoyl)-sn-glycero-3-phospho-L-serine + CoA</text>
        <dbReference type="Rhea" id="RHEA:37379"/>
        <dbReference type="ChEBI" id="CHEBI:57287"/>
        <dbReference type="ChEBI" id="CHEBI:57368"/>
        <dbReference type="ChEBI" id="CHEBI:74617"/>
        <dbReference type="ChEBI" id="CHEBI:74897"/>
    </reaction>
    <physiologicalReaction direction="left-to-right" evidence="6">
        <dbReference type="Rhea" id="RHEA:37380"/>
    </physiologicalReaction>
</comment>
<comment type="catalytic activity">
    <reaction evidence="4">
        <text>1-hexadecanoyl-sn-glycero-3-phosphate + (9Z)-octadecenoyl-CoA = 1-hexadecanoyl-2-(9Z-octadecenoyl)-sn-glycero-3-phosphate + CoA</text>
        <dbReference type="Rhea" id="RHEA:33187"/>
        <dbReference type="ChEBI" id="CHEBI:57287"/>
        <dbReference type="ChEBI" id="CHEBI:57387"/>
        <dbReference type="ChEBI" id="CHEBI:57518"/>
        <dbReference type="ChEBI" id="CHEBI:64839"/>
    </reaction>
    <physiologicalReaction direction="left-to-right" evidence="6">
        <dbReference type="Rhea" id="RHEA:33188"/>
    </physiologicalReaction>
</comment>
<comment type="catalytic activity">
    <reaction evidence="4">
        <text>1-heptadecanoyl-sn-glycero-3-phosphate + (9Z)-octadecenoyl-CoA = 1-heptadecanoyl-2-(9Z)-octadecenoyl-sn-glycero-3-phosphate + CoA</text>
        <dbReference type="Rhea" id="RHEA:37151"/>
        <dbReference type="ChEBI" id="CHEBI:57287"/>
        <dbReference type="ChEBI" id="CHEBI:57387"/>
        <dbReference type="ChEBI" id="CHEBI:74554"/>
        <dbReference type="ChEBI" id="CHEBI:74556"/>
    </reaction>
    <physiologicalReaction direction="left-to-right" evidence="6">
        <dbReference type="Rhea" id="RHEA:37152"/>
    </physiologicalReaction>
</comment>
<comment type="catalytic activity">
    <reaction evidence="4">
        <text>1-(5Z,8Z,11Z,14Z-eicosatetraenoyl)-sn-glycero-3-phosphate + (9Z)-octadecenoyl-CoA = 1-(5Z,8Z,11Z,14Z)-eicosatetraenoyl-2-(9Z)-octadecenoyl-sn-glycero-3-phosphate + CoA</text>
        <dbReference type="Rhea" id="RHEA:37455"/>
        <dbReference type="ChEBI" id="CHEBI:57287"/>
        <dbReference type="ChEBI" id="CHEBI:57387"/>
        <dbReference type="ChEBI" id="CHEBI:74938"/>
        <dbReference type="ChEBI" id="CHEBI:74941"/>
    </reaction>
    <physiologicalReaction direction="left-to-right" evidence="6">
        <dbReference type="Rhea" id="RHEA:37456"/>
    </physiologicalReaction>
</comment>
<comment type="catalytic activity">
    <reaction evidence="4">
        <text>1-octadecanoyl-sn-glycero-3-phosphate + (9Z)-octadecenoyl-CoA = 1-octadecanoyl-2-(9Z-octadecenoyl)-sn-glycero-3-phosphate + CoA</text>
        <dbReference type="Rhea" id="RHEA:37163"/>
        <dbReference type="ChEBI" id="CHEBI:57287"/>
        <dbReference type="ChEBI" id="CHEBI:57387"/>
        <dbReference type="ChEBI" id="CHEBI:74560"/>
        <dbReference type="ChEBI" id="CHEBI:74565"/>
    </reaction>
    <physiologicalReaction direction="left-to-right" evidence="6">
        <dbReference type="Rhea" id="RHEA:37164"/>
    </physiologicalReaction>
</comment>
<comment type="catalytic activity">
    <reaction evidence="4">
        <text>1-(9Z-octadecenoyl)-sn-glycero-3-phosphate + (5Z,8Z,11Z,14Z)-eicosatetraenoyl-CoA = 1-(9Z)-octadecenoyl-2-(5Z,8Z,11Z,14Z)-eicosatetraenoyl-sn-glycero-3-phosphate + CoA</text>
        <dbReference type="Rhea" id="RHEA:37443"/>
        <dbReference type="ChEBI" id="CHEBI:57287"/>
        <dbReference type="ChEBI" id="CHEBI:57368"/>
        <dbReference type="ChEBI" id="CHEBI:74544"/>
        <dbReference type="ChEBI" id="CHEBI:74928"/>
    </reaction>
    <physiologicalReaction direction="left-to-right" evidence="6">
        <dbReference type="Rhea" id="RHEA:37444"/>
    </physiologicalReaction>
</comment>
<comment type="catalytic activity">
    <reaction evidence="4">
        <text>heptadecanoyl-CoA + 1-(9Z-octadecenoyl)-sn-glycero-3-phosphate = 1-(9Z)-octadecenoyl-2-heptadecanoyl-sn-glycero-3-phosphate + CoA</text>
        <dbReference type="Rhea" id="RHEA:37155"/>
        <dbReference type="ChEBI" id="CHEBI:57287"/>
        <dbReference type="ChEBI" id="CHEBI:74307"/>
        <dbReference type="ChEBI" id="CHEBI:74544"/>
        <dbReference type="ChEBI" id="CHEBI:74558"/>
    </reaction>
    <physiologicalReaction direction="left-to-right" evidence="6">
        <dbReference type="Rhea" id="RHEA:37156"/>
    </physiologicalReaction>
</comment>
<comment type="catalytic activity">
    <reaction evidence="4">
        <text>1-(9Z-octadecenoyl)-sn-glycero-3-phosphocholine + (5Z,8Z,11Z,14Z)-eicosatetraenoyl-CoA = 1-(9Z)-octadecenoyl-2-(5Z,8Z,11Z,14Z)-icosatetraenoyl-sn-glycero-3-phosphocholine + CoA</text>
        <dbReference type="Rhea" id="RHEA:37395"/>
        <dbReference type="ChEBI" id="CHEBI:28610"/>
        <dbReference type="ChEBI" id="CHEBI:57287"/>
        <dbReference type="ChEBI" id="CHEBI:57368"/>
        <dbReference type="ChEBI" id="CHEBI:74671"/>
    </reaction>
    <physiologicalReaction direction="left-to-right" evidence="6">
        <dbReference type="Rhea" id="RHEA:37396"/>
    </physiologicalReaction>
</comment>
<comment type="catalytic activity">
    <reaction evidence="4">
        <text>1-(9Z-octadecenoyl)-sn-glycero-3-phosphate + (9Z)-octadecenoyl-CoA = 1,2-di-(9Z-octadecenoyl)-sn-glycero-3-phosphate + CoA</text>
        <dbReference type="Rhea" id="RHEA:37131"/>
        <dbReference type="ChEBI" id="CHEBI:57287"/>
        <dbReference type="ChEBI" id="CHEBI:57387"/>
        <dbReference type="ChEBI" id="CHEBI:74544"/>
        <dbReference type="ChEBI" id="CHEBI:74546"/>
    </reaction>
    <physiologicalReaction direction="left-to-right" evidence="6">
        <dbReference type="Rhea" id="RHEA:37132"/>
    </physiologicalReaction>
</comment>
<comment type="catalytic activity">
    <reaction evidence="4">
        <text>1-(9Z-octadecenoyl)-sn-glycero-3-phosphate + hexadecanoyl-CoA = 1-hexadecanoyl-2-(9Z-octadecenoyl)-sn-glycero-3-phosphate + CoA</text>
        <dbReference type="Rhea" id="RHEA:42592"/>
        <dbReference type="ChEBI" id="CHEBI:57287"/>
        <dbReference type="ChEBI" id="CHEBI:57379"/>
        <dbReference type="ChEBI" id="CHEBI:64839"/>
        <dbReference type="ChEBI" id="CHEBI:74544"/>
    </reaction>
    <physiologicalReaction direction="left-to-right" evidence="6">
        <dbReference type="Rhea" id="RHEA:42593"/>
    </physiologicalReaction>
</comment>
<comment type="biophysicochemical properties">
    <kinetics>
        <KM evidence="4">5.52 uM for LPA sn-1 C18:1</KM>
        <KM evidence="4">16.3 uM for C18:1-CoA</KM>
        <Vmax evidence="4">2.42 nmol/min/mg enzyme toward LPA sn-1 C18:1</Vmax>
        <Vmax evidence="4">1.22 nmol/min/mg enzyme toward C18:1-CoA</Vmax>
    </kinetics>
</comment>
<comment type="pathway">
    <text>Phospholipid metabolism; CDP-diacylglycerol biosynthesis; CDP-diacylglycerol from sn-glycerol 3-phosphate: step 2/3.</text>
</comment>
<comment type="interaction">
    <interactant intactId="EBI-6916385">
        <id>Q9NUQ2</id>
    </interactant>
    <interactant intactId="EBI-6942903">
        <id>Q96BA8</id>
        <label>CREB3L1</label>
    </interactant>
    <organismsDiffer>false</organismsDiffer>
    <experiments>3</experiments>
</comment>
<comment type="interaction">
    <interactant intactId="EBI-6916385">
        <id>Q9NUQ2</id>
    </interactant>
    <interactant intactId="EBI-10269179">
        <id>Q8NBI2</id>
        <label>CYB561A3</label>
    </interactant>
    <organismsDiffer>false</organismsDiffer>
    <experiments>3</experiments>
</comment>
<comment type="interaction">
    <interactant intactId="EBI-6916385">
        <id>Q9NUQ2</id>
    </interactant>
    <interactant intactId="EBI-17247926">
        <id>Q9NY72</id>
        <label>SCN3B</label>
    </interactant>
    <organismsDiffer>false</organismsDiffer>
    <experiments>3</experiments>
</comment>
<comment type="interaction">
    <interactant intactId="EBI-6916385">
        <id>Q9NUQ2</id>
    </interactant>
    <interactant intactId="EBI-6447886">
        <id>Q9Y320</id>
        <label>TMX2</label>
    </interactant>
    <organismsDiffer>false</organismsDiffer>
    <experiments>3</experiments>
</comment>
<comment type="interaction">
    <interactant intactId="EBI-6916385">
        <id>Q9NUQ2</id>
    </interactant>
    <interactant intactId="EBI-741480">
        <id>Q9UMX0</id>
        <label>UBQLN1</label>
    </interactant>
    <organismsDiffer>false</organismsDiffer>
    <experiments>6</experiments>
</comment>
<comment type="subcellular location">
    <subcellularLocation>
        <location evidence="4">Endoplasmic reticulum membrane</location>
        <topology evidence="2">Multi-pass membrane protein</topology>
    </subcellularLocation>
    <subcellularLocation>
        <location evidence="4">Nucleus envelope</location>
    </subcellularLocation>
    <subcellularLocation>
        <location evidence="4">Mitochondrion</location>
    </subcellularLocation>
</comment>
<comment type="tissue specificity">
    <text evidence="3 4">Widely expressed.</text>
</comment>
<comment type="domain">
    <text evidence="1">The HXXXXD motif is essential for acyltransferase activity and may constitute the binding site for the phosphate moiety of the glycerol-3-phosphate.</text>
</comment>
<comment type="similarity">
    <text evidence="5">Belongs to the 1-acyl-sn-glycerol-3-phosphate acyltransferase family.</text>
</comment>
<comment type="caution">
    <text evidence="5">It is uncertain whether Met-1 or Met-12 is the initiator.</text>
</comment>
<comment type="sequence caution" evidence="5">
    <conflict type="erroneous initiation">
        <sequence resource="EMBL-CDS" id="BAA92069"/>
    </conflict>
    <text>Truncated N-terminus.</text>
</comment>
<dbReference type="EC" id="2.3.1.51" evidence="4"/>
<dbReference type="EMBL" id="AF375789">
    <property type="protein sequence ID" value="AAK54809.1"/>
    <property type="molecule type" value="mRNA"/>
</dbReference>
<dbReference type="EMBL" id="AL136587">
    <property type="protein sequence ID" value="CAB66522.1"/>
    <property type="molecule type" value="mRNA"/>
</dbReference>
<dbReference type="EMBL" id="BC023550">
    <property type="protein sequence ID" value="AAH23550.1"/>
    <property type="molecule type" value="mRNA"/>
</dbReference>
<dbReference type="EMBL" id="BC080537">
    <property type="protein sequence ID" value="AAH80537.1"/>
    <property type="molecule type" value="mRNA"/>
</dbReference>
<dbReference type="EMBL" id="AK002072">
    <property type="protein sequence ID" value="BAA92069.1"/>
    <property type="status" value="ALT_INIT"/>
    <property type="molecule type" value="mRNA"/>
</dbReference>
<dbReference type="CCDS" id="CCDS34796.1"/>
<dbReference type="RefSeq" id="NP_060831.2">
    <property type="nucleotide sequence ID" value="NM_018361.5"/>
</dbReference>
<dbReference type="BioGRID" id="120607">
    <property type="interactions" value="106"/>
</dbReference>
<dbReference type="FunCoup" id="Q9NUQ2">
    <property type="interactions" value="1893"/>
</dbReference>
<dbReference type="IntAct" id="Q9NUQ2">
    <property type="interactions" value="49"/>
</dbReference>
<dbReference type="MINT" id="Q9NUQ2"/>
<dbReference type="STRING" id="9606.ENSP00000285518"/>
<dbReference type="SwissLipids" id="SLP:000000822"/>
<dbReference type="iPTMnet" id="Q9NUQ2"/>
<dbReference type="PhosphoSitePlus" id="Q9NUQ2"/>
<dbReference type="SwissPalm" id="Q9NUQ2"/>
<dbReference type="BioMuta" id="AGPAT5"/>
<dbReference type="DMDM" id="30923427"/>
<dbReference type="jPOST" id="Q9NUQ2"/>
<dbReference type="MassIVE" id="Q9NUQ2"/>
<dbReference type="PaxDb" id="9606-ENSP00000285518"/>
<dbReference type="PeptideAtlas" id="Q9NUQ2"/>
<dbReference type="ProteomicsDB" id="82706"/>
<dbReference type="Pumba" id="Q9NUQ2"/>
<dbReference type="Antibodypedia" id="2138">
    <property type="antibodies" value="316 antibodies from 27 providers"/>
</dbReference>
<dbReference type="DNASU" id="55326"/>
<dbReference type="Ensembl" id="ENST00000285518.11">
    <property type="protein sequence ID" value="ENSP00000285518.6"/>
    <property type="gene ID" value="ENSG00000155189.12"/>
</dbReference>
<dbReference type="Ensembl" id="ENST00000646327.2">
    <property type="protein sequence ID" value="ENSP00000495562.1"/>
    <property type="gene ID" value="ENSG00000284980.2"/>
</dbReference>
<dbReference type="GeneID" id="55326"/>
<dbReference type="KEGG" id="hsa:55326"/>
<dbReference type="MANE-Select" id="ENST00000285518.11">
    <property type="protein sequence ID" value="ENSP00000285518.6"/>
    <property type="RefSeq nucleotide sequence ID" value="NM_018361.5"/>
    <property type="RefSeq protein sequence ID" value="NP_060831.2"/>
</dbReference>
<dbReference type="UCSC" id="uc003wqo.4">
    <property type="organism name" value="human"/>
</dbReference>
<dbReference type="AGR" id="HGNC:20886"/>
<dbReference type="CTD" id="55326"/>
<dbReference type="DisGeNET" id="55326"/>
<dbReference type="GeneCards" id="AGPAT5"/>
<dbReference type="HGNC" id="HGNC:20886">
    <property type="gene designation" value="AGPAT5"/>
</dbReference>
<dbReference type="HPA" id="ENSG00000155189">
    <property type="expression patterns" value="Tissue enhanced (brain)"/>
</dbReference>
<dbReference type="MIM" id="614796">
    <property type="type" value="gene"/>
</dbReference>
<dbReference type="neXtProt" id="NX_Q9NUQ2"/>
<dbReference type="OpenTargets" id="ENSG00000155189"/>
<dbReference type="PharmGKB" id="PA134952751"/>
<dbReference type="VEuPathDB" id="HostDB:ENSG00000155189"/>
<dbReference type="eggNOG" id="KOG1505">
    <property type="taxonomic scope" value="Eukaryota"/>
</dbReference>
<dbReference type="GeneTree" id="ENSGT00950000182836"/>
<dbReference type="HOGENOM" id="CLU_041844_2_0_1"/>
<dbReference type="InParanoid" id="Q9NUQ2"/>
<dbReference type="OMA" id="HRSTVDW"/>
<dbReference type="OrthoDB" id="189226at2759"/>
<dbReference type="PAN-GO" id="Q9NUQ2">
    <property type="GO annotations" value="3 GO annotations based on evolutionary models"/>
</dbReference>
<dbReference type="PhylomeDB" id="Q9NUQ2"/>
<dbReference type="TreeFam" id="TF314346"/>
<dbReference type="BioCyc" id="MetaCyc:HS08034-MONOMER"/>
<dbReference type="BRENDA" id="2.3.1.51">
    <property type="organism ID" value="2681"/>
</dbReference>
<dbReference type="PathwayCommons" id="Q9NUQ2"/>
<dbReference type="Reactome" id="R-HSA-1483166">
    <property type="pathway name" value="Synthesis of PA"/>
</dbReference>
<dbReference type="SABIO-RK" id="Q9NUQ2"/>
<dbReference type="SignaLink" id="Q9NUQ2"/>
<dbReference type="SIGNOR" id="Q9NUQ2"/>
<dbReference type="UniPathway" id="UPA00557">
    <property type="reaction ID" value="UER00613"/>
</dbReference>
<dbReference type="BioGRID-ORCS" id="55326">
    <property type="hits" value="21 hits in 1162 CRISPR screens"/>
</dbReference>
<dbReference type="CD-CODE" id="FB4E32DD">
    <property type="entry name" value="Presynaptic clusters and postsynaptic densities"/>
</dbReference>
<dbReference type="ChiTaRS" id="AGPAT5">
    <property type="organism name" value="human"/>
</dbReference>
<dbReference type="GeneWiki" id="AGPAT5"/>
<dbReference type="GenomeRNAi" id="55326"/>
<dbReference type="Pharos" id="Q9NUQ2">
    <property type="development level" value="Tbio"/>
</dbReference>
<dbReference type="PRO" id="PR:Q9NUQ2"/>
<dbReference type="Proteomes" id="UP000005640">
    <property type="component" value="Chromosome 8"/>
</dbReference>
<dbReference type="RNAct" id="Q9NUQ2">
    <property type="molecule type" value="protein"/>
</dbReference>
<dbReference type="Bgee" id="ENSG00000155189">
    <property type="expression patterns" value="Expressed in corpus callosum and 112 other cell types or tissues"/>
</dbReference>
<dbReference type="ExpressionAtlas" id="Q9NUQ2">
    <property type="expression patterns" value="baseline and differential"/>
</dbReference>
<dbReference type="GO" id="GO:0012505">
    <property type="term" value="C:endomembrane system"/>
    <property type="evidence" value="ECO:0000318"/>
    <property type="project" value="GO_Central"/>
</dbReference>
<dbReference type="GO" id="GO:0005783">
    <property type="term" value="C:endoplasmic reticulum"/>
    <property type="evidence" value="ECO:0000318"/>
    <property type="project" value="GO_Central"/>
</dbReference>
<dbReference type="GO" id="GO:0005789">
    <property type="term" value="C:endoplasmic reticulum membrane"/>
    <property type="evidence" value="ECO:0000314"/>
    <property type="project" value="UniProtKB"/>
</dbReference>
<dbReference type="GO" id="GO:0005741">
    <property type="term" value="C:mitochondrial outer membrane"/>
    <property type="evidence" value="ECO:0000304"/>
    <property type="project" value="Reactome"/>
</dbReference>
<dbReference type="GO" id="GO:0005739">
    <property type="term" value="C:mitochondrion"/>
    <property type="evidence" value="ECO:0000314"/>
    <property type="project" value="UniProtKB"/>
</dbReference>
<dbReference type="GO" id="GO:0005635">
    <property type="term" value="C:nuclear envelope"/>
    <property type="evidence" value="ECO:0000314"/>
    <property type="project" value="UniProtKB"/>
</dbReference>
<dbReference type="GO" id="GO:0005730">
    <property type="term" value="C:nucleolus"/>
    <property type="evidence" value="ECO:0000314"/>
    <property type="project" value="HPA"/>
</dbReference>
<dbReference type="GO" id="GO:0003841">
    <property type="term" value="F:1-acylglycerol-3-phosphate O-acyltransferase activity"/>
    <property type="evidence" value="ECO:0000314"/>
    <property type="project" value="UniProtKB"/>
</dbReference>
<dbReference type="GO" id="GO:0016746">
    <property type="term" value="F:acyltransferase activity"/>
    <property type="evidence" value="ECO:0000318"/>
    <property type="project" value="GO_Central"/>
</dbReference>
<dbReference type="GO" id="GO:0006639">
    <property type="term" value="P:acylglycerol metabolic process"/>
    <property type="evidence" value="ECO:0007669"/>
    <property type="project" value="Ensembl"/>
</dbReference>
<dbReference type="GO" id="GO:0016024">
    <property type="term" value="P:CDP-diacylglycerol biosynthetic process"/>
    <property type="evidence" value="ECO:0007669"/>
    <property type="project" value="UniProtKB-UniPathway"/>
</dbReference>
<dbReference type="GO" id="GO:0002244">
    <property type="term" value="P:hematopoietic progenitor cell differentiation"/>
    <property type="evidence" value="ECO:0007669"/>
    <property type="project" value="Ensembl"/>
</dbReference>
<dbReference type="GO" id="GO:0006654">
    <property type="term" value="P:phosphatidic acid biosynthetic process"/>
    <property type="evidence" value="ECO:0000304"/>
    <property type="project" value="Reactome"/>
</dbReference>
<dbReference type="GO" id="GO:0036149">
    <property type="term" value="P:phosphatidylinositol acyl-chain remodeling"/>
    <property type="evidence" value="ECO:0000318"/>
    <property type="project" value="GO_Central"/>
</dbReference>
<dbReference type="GO" id="GO:0008654">
    <property type="term" value="P:phospholipid biosynthetic process"/>
    <property type="evidence" value="ECO:0000303"/>
    <property type="project" value="UniProtKB"/>
</dbReference>
<dbReference type="CDD" id="cd07990">
    <property type="entry name" value="LPLAT_LCLAT1-like"/>
    <property type="match status" value="1"/>
</dbReference>
<dbReference type="InterPro" id="IPR032098">
    <property type="entry name" value="Acyltransf_C"/>
</dbReference>
<dbReference type="InterPro" id="IPR002123">
    <property type="entry name" value="Plipid/glycerol_acylTrfase"/>
</dbReference>
<dbReference type="PANTHER" id="PTHR10983:SF73">
    <property type="entry name" value="1-ACYL-SN-GLYCEROL-3-PHOSPHATE ACYLTRANSFERASE EPSILON"/>
    <property type="match status" value="1"/>
</dbReference>
<dbReference type="PANTHER" id="PTHR10983">
    <property type="entry name" value="1-ACYLGLYCEROL-3-PHOSPHATE ACYLTRANSFERASE-RELATED"/>
    <property type="match status" value="1"/>
</dbReference>
<dbReference type="Pfam" id="PF16076">
    <property type="entry name" value="Acyltransf_C"/>
    <property type="match status" value="1"/>
</dbReference>
<dbReference type="Pfam" id="PF01553">
    <property type="entry name" value="Acyltransferase"/>
    <property type="match status" value="1"/>
</dbReference>
<dbReference type="SMART" id="SM00563">
    <property type="entry name" value="PlsC"/>
    <property type="match status" value="1"/>
</dbReference>
<dbReference type="SUPFAM" id="SSF69593">
    <property type="entry name" value="Glycerol-3-phosphate (1)-acyltransferase"/>
    <property type="match status" value="1"/>
</dbReference>
<sequence length="364" mass="42072">MLLSLVLHTYSMRYLLPSVVLLGTAPTYVLAWGVWRLLSAFLPARFYQALDDRLYCVYQSMVLFFFENYTGVQILLYGDLPKNKENIIYLANHQSTVDWIVADILAIRQNALGHVRYVLKEGLKWLPLYGCYFAQHGGIYVKRSAKFNEKEMRNKLQSYVDAGTPMYLVIFPEGTRYNPEQTKVLSASQAFAAQRGLAVLKHVLTPRIKATHVAFDCMKNYLDAIYDVTVVYEGKDDGGQRRESPTMTEFLCKECPKIHIHIDRIDKKDVPEEQEHMRRWLHERFEIKDKMLIEFYESPDPERRKRFPGKSVNSKLSIKKTLPSMLILSGLTAGMLMTDAGRKLYVNTWIYGTLLGCLWVTIKA</sequence>